<reference key="1">
    <citation type="journal article" date="1995" name="J. Biol. Chem.">
        <title>Functional characterization of the murine homolog of the B cell-specific coactivator BOB.1/OBF.1.</title>
        <authorList>
            <person name="Pfisterer P."/>
            <person name="Zwilling S."/>
            <person name="Hess J."/>
            <person name="Wirth T."/>
        </authorList>
    </citation>
    <scope>NUCLEOTIDE SEQUENCE [MRNA]</scope>
    <source>
        <strain>BALB/cJ</strain>
    </source>
</reference>
<reference key="2">
    <citation type="journal article" date="1996" name="Nucleic Acids Res.">
        <title>Gene structure and characterization of the murine homologue of the B cell-specific transcriptional coactivator OBF-1.</title>
        <authorList>
            <person name="Schubart D.B."/>
            <person name="Sauter P."/>
            <person name="Massa S."/>
            <person name="Friedl E.M."/>
            <person name="Schwarzenbach H."/>
            <person name="Matthias P."/>
        </authorList>
    </citation>
    <scope>NUCLEOTIDE SEQUENCE [MRNA]</scope>
</reference>
<reference key="3">
    <citation type="journal article" date="1996" name="Biol. Chem. Hoppe-Seyler">
        <title>Cloning and characterization of the murine B-cell specific transcriptional coactivator Bob1.</title>
        <authorList>
            <person name="Knoepfel L."/>
            <person name="Georgiev O."/>
            <person name="Nielsen P."/>
            <person name="Schaffner W."/>
        </authorList>
    </citation>
    <scope>NUCLEOTIDE SEQUENCE [MRNA]</scope>
</reference>
<reference key="4">
    <citation type="journal article" date="2012" name="J. Exp. Med.">
        <title>B and T cells collaborate in antiviral responses via IL-6, IL-21, and transcriptional activator and coactivator, Oct2 and OBF-1.</title>
        <authorList>
            <person name="Karnowski A."/>
            <person name="Chevrier S."/>
            <person name="Belz G.T."/>
            <person name="Mount A."/>
            <person name="Emslie D."/>
            <person name="D'Costa K."/>
            <person name="Tarlinton D.M."/>
            <person name="Kallies A."/>
            <person name="Corcoran L.M."/>
        </authorList>
    </citation>
    <scope>FUNCTION</scope>
    <scope>TISSUE SPECIFICITY</scope>
    <scope>DISRUPTION PHENOTYPE</scope>
    <scope>INDUCTION BY LPS</scope>
</reference>
<dbReference type="EMBL" id="Z54283">
    <property type="protein sequence ID" value="CAA91058.1"/>
    <property type="molecule type" value="mRNA"/>
</dbReference>
<dbReference type="EMBL" id="U43788">
    <property type="protein sequence ID" value="AAC52618.1"/>
    <property type="molecule type" value="mRNA"/>
</dbReference>
<dbReference type="CCDS" id="CCDS23176.1"/>
<dbReference type="PIR" id="S63588">
    <property type="entry name" value="S63588"/>
</dbReference>
<dbReference type="RefSeq" id="NP_035266.1">
    <property type="nucleotide sequence ID" value="NM_011136.2"/>
</dbReference>
<dbReference type="SMR" id="Q64693"/>
<dbReference type="DIP" id="DIP-977N"/>
<dbReference type="FunCoup" id="Q64693">
    <property type="interactions" value="289"/>
</dbReference>
<dbReference type="IntAct" id="Q64693">
    <property type="interactions" value="3"/>
</dbReference>
<dbReference type="STRING" id="10090.ENSMUSP00000034554"/>
<dbReference type="GlyGen" id="Q64693">
    <property type="glycosylation" value="1 site"/>
</dbReference>
<dbReference type="iPTMnet" id="Q64693"/>
<dbReference type="PhosphoSitePlus" id="Q64693"/>
<dbReference type="PaxDb" id="10090-ENSMUSP00000034554"/>
<dbReference type="ProteomicsDB" id="293823"/>
<dbReference type="Antibodypedia" id="4401">
    <property type="antibodies" value="703 antibodies from 40 providers"/>
</dbReference>
<dbReference type="DNASU" id="18985"/>
<dbReference type="Ensembl" id="ENSMUST00000034554.9">
    <property type="protein sequence ID" value="ENSMUSP00000034554.8"/>
    <property type="gene ID" value="ENSMUSG00000032053.9"/>
</dbReference>
<dbReference type="GeneID" id="18985"/>
<dbReference type="KEGG" id="mmu:18985"/>
<dbReference type="UCSC" id="uc009plg.1">
    <property type="organism name" value="mouse"/>
</dbReference>
<dbReference type="AGR" id="MGI:105086"/>
<dbReference type="CTD" id="5450"/>
<dbReference type="MGI" id="MGI:105086">
    <property type="gene designation" value="Pou2af1"/>
</dbReference>
<dbReference type="VEuPathDB" id="HostDB:ENSMUSG00000032053"/>
<dbReference type="eggNOG" id="ENOG502R5JD">
    <property type="taxonomic scope" value="Eukaryota"/>
</dbReference>
<dbReference type="GeneTree" id="ENSGT00390000017499"/>
<dbReference type="HOGENOM" id="CLU_095920_0_0_1"/>
<dbReference type="InParanoid" id="Q64693"/>
<dbReference type="OMA" id="SPIGQPC"/>
<dbReference type="OrthoDB" id="194358at2759"/>
<dbReference type="PhylomeDB" id="Q64693"/>
<dbReference type="TreeFam" id="TF332565"/>
<dbReference type="BioGRID-ORCS" id="18985">
    <property type="hits" value="0 hits in 78 CRISPR screens"/>
</dbReference>
<dbReference type="ChiTaRS" id="Pou2af1">
    <property type="organism name" value="mouse"/>
</dbReference>
<dbReference type="PRO" id="PR:Q64693"/>
<dbReference type="Proteomes" id="UP000000589">
    <property type="component" value="Chromosome 9"/>
</dbReference>
<dbReference type="RNAct" id="Q64693">
    <property type="molecule type" value="protein"/>
</dbReference>
<dbReference type="Bgee" id="ENSMUSG00000032053">
    <property type="expression patterns" value="Expressed in peripheral lymph node and 66 other cell types or tissues"/>
</dbReference>
<dbReference type="ExpressionAtlas" id="Q64693">
    <property type="expression patterns" value="baseline and differential"/>
</dbReference>
<dbReference type="GO" id="GO:0090575">
    <property type="term" value="C:RNA polymerase II transcription regulator complex"/>
    <property type="evidence" value="ECO:0007669"/>
    <property type="project" value="Ensembl"/>
</dbReference>
<dbReference type="GO" id="GO:0003677">
    <property type="term" value="F:DNA binding"/>
    <property type="evidence" value="ECO:0000314"/>
    <property type="project" value="MGI"/>
</dbReference>
<dbReference type="GO" id="GO:0070974">
    <property type="term" value="F:POU domain binding"/>
    <property type="evidence" value="ECO:0007669"/>
    <property type="project" value="InterPro"/>
</dbReference>
<dbReference type="GO" id="GO:0003713">
    <property type="term" value="F:transcription coactivator activity"/>
    <property type="evidence" value="ECO:0000314"/>
    <property type="project" value="UniProtKB"/>
</dbReference>
<dbReference type="GO" id="GO:0098586">
    <property type="term" value="P:cellular response to virus"/>
    <property type="evidence" value="ECO:0000315"/>
    <property type="project" value="UniProtKB"/>
</dbReference>
<dbReference type="GO" id="GO:0002314">
    <property type="term" value="P:germinal center B cell differentiation"/>
    <property type="evidence" value="ECO:0000315"/>
    <property type="project" value="UniProtKB"/>
</dbReference>
<dbReference type="GO" id="GO:0032755">
    <property type="term" value="P:positive regulation of interleukin-6 production"/>
    <property type="evidence" value="ECO:0000314"/>
    <property type="project" value="UniProtKB"/>
</dbReference>
<dbReference type="GO" id="GO:0045944">
    <property type="term" value="P:positive regulation of transcription by RNA polymerase II"/>
    <property type="evidence" value="ECO:0007669"/>
    <property type="project" value="Ensembl"/>
</dbReference>
<dbReference type="DisProt" id="DP00008"/>
<dbReference type="InterPro" id="IPR047571">
    <property type="entry name" value="OCA"/>
</dbReference>
<dbReference type="InterPro" id="IPR015389">
    <property type="entry name" value="PD-C2-AF1"/>
</dbReference>
<dbReference type="PANTHER" id="PTHR15363">
    <property type="entry name" value="POU DOMAIN CLASS 2-ASSOCIATING FACTOR 1"/>
    <property type="match status" value="1"/>
</dbReference>
<dbReference type="PANTHER" id="PTHR15363:SF3">
    <property type="entry name" value="POU DOMAIN CLASS 2-ASSOCIATING FACTOR 1"/>
    <property type="match status" value="1"/>
</dbReference>
<dbReference type="Pfam" id="PF09310">
    <property type="entry name" value="PD-C2-AF1"/>
    <property type="match status" value="1"/>
</dbReference>
<dbReference type="PROSITE" id="PS52003">
    <property type="entry name" value="OCA"/>
    <property type="match status" value="1"/>
</dbReference>
<sequence length="256" mass="27692">MLWQKSTAPEQAPAPPRPYQGVRVKEPVKELLRRKRGHTSVGAAGPPTAVVLPHQPLATYSTVGPSCLDMEVSASTVTEEGTLCAGWLSQPAPATLQPLAPWTPYTEYVSHEAVSCPYSTDMYVQPVCPSYTVVGPSSVLTYASPPLITNVTPRSTATPAVGPQLEGPEHQAPLTYFPWPQPLSTLPTSSLQYQPPAPTLSGPQFVQLPISIPEPVLQDMDDPRRAISSLTIDKLLLEEEESNTYELNHTLSVEGF</sequence>
<protein>
    <recommendedName>
        <fullName evidence="5">POU domain class 2-associating factor 1</fullName>
    </recommendedName>
    <alternativeName>
        <fullName>B-cell-specific coactivator OBF-1</fullName>
    </alternativeName>
    <alternativeName>
        <fullName>BOB-1</fullName>
        <shortName>BOB1</shortName>
    </alternativeName>
    <alternativeName>
        <fullName>OCA-B</fullName>
    </alternativeName>
    <alternativeName>
        <fullName>OCT-binding factor 1</fullName>
    </alternativeName>
</protein>
<comment type="function">
    <text evidence="4">Transcriptional coactivator that specifically associates with either POU2F1/OCT1 or POU2F2/OCT2. It boosts the POU2F1/OCT1 mediated promoter activity and to a lesser extent, that of POU2F2/OCT2. It recognizes the POU domains of POU2F1/OCT1 and POU2F2/OCT2. It is essential for the response of B-cells to antigens and required for the formation of germinal centers (PubMed:23045607). Regulates IL6 expression in B cells as POU2F2/OCT2 coactivator (PubMed:23045607).</text>
</comment>
<comment type="subunit">
    <text evidence="1">Interacts with POU2F1/OCT1 and POU2F2/OCT2; the interaction increases POU2F1 and POU2F2 transactivation activity.</text>
</comment>
<comment type="interaction">
    <interactant intactId="EBI-943530">
        <id>Q64693</id>
    </interactant>
    <interactant intactId="EBI-300116">
        <id>P48025</id>
        <label>Syk</label>
    </interactant>
    <organismsDiffer>false</organismsDiffer>
    <experiments>2</experiments>
</comment>
<comment type="interaction">
    <interactant intactId="EBI-943530">
        <id>Q64693</id>
    </interactant>
    <interactant intactId="EBI-747107">
        <id>Q8IUQ4</id>
        <label>SIAH1</label>
    </interactant>
    <organismsDiffer>true</organismsDiffer>
    <experiments>5</experiments>
</comment>
<comment type="subcellular location">
    <subcellularLocation>
        <location evidence="5">Nucleus</location>
    </subcellularLocation>
</comment>
<comment type="tissue specificity">
    <text evidence="6">B-cell specific.</text>
</comment>
<comment type="induction">
    <text evidence="4">In B cells, expression is highly increased upon activation by LPS or CpG.</text>
</comment>
<comment type="domain">
    <text evidence="1">In the N-terminus possesses a conserved domain OCA for bivalent binding to class II POU domain-containing transcription factors and to an octamer DNA motif.</text>
</comment>
<comment type="PTM">
    <text evidence="1">Ubiquitinated; mediated by SIAH1 or SIAH2 and leading to its subsequent proteasomal degradation.</text>
</comment>
<comment type="disruption phenotype">
    <text evidence="4">Mutants show severely reduced or absent germinal center B cells in the lung-draining lymphatic nodes when infected by influenza virus.</text>
</comment>
<comment type="similarity">
    <text evidence="5">Belongs to the POU2AF family.</text>
</comment>
<feature type="chain" id="PRO_0000058019" description="POU domain class 2-associating factor 1">
    <location>
        <begin position="1"/>
        <end position="256"/>
    </location>
</feature>
<feature type="domain" description="OCA" evidence="2">
    <location>
        <begin position="16"/>
        <end position="38"/>
    </location>
</feature>
<feature type="region of interest" description="Disordered" evidence="3">
    <location>
        <begin position="1"/>
        <end position="24"/>
    </location>
</feature>
<feature type="sequence conflict" description="In Ref. 1; CAA91058." evidence="5" ref="1">
    <original>V</original>
    <variation>G</variation>
    <location>
        <position position="50"/>
    </location>
</feature>
<feature type="sequence conflict" description="In Ref. 1; CAA91058." evidence="5" ref="1">
    <original>QP</original>
    <variation>HA</variation>
    <location>
        <begin position="97"/>
        <end position="98"/>
    </location>
</feature>
<name>OBF1_MOUSE</name>
<organism>
    <name type="scientific">Mus musculus</name>
    <name type="common">Mouse</name>
    <dbReference type="NCBI Taxonomy" id="10090"/>
    <lineage>
        <taxon>Eukaryota</taxon>
        <taxon>Metazoa</taxon>
        <taxon>Chordata</taxon>
        <taxon>Craniata</taxon>
        <taxon>Vertebrata</taxon>
        <taxon>Euteleostomi</taxon>
        <taxon>Mammalia</taxon>
        <taxon>Eutheria</taxon>
        <taxon>Euarchontoglires</taxon>
        <taxon>Glires</taxon>
        <taxon>Rodentia</taxon>
        <taxon>Myomorpha</taxon>
        <taxon>Muroidea</taxon>
        <taxon>Muridae</taxon>
        <taxon>Murinae</taxon>
        <taxon>Mus</taxon>
        <taxon>Mus</taxon>
    </lineage>
</organism>
<keyword id="KW-0010">Activator</keyword>
<keyword id="KW-0539">Nucleus</keyword>
<keyword id="KW-1185">Reference proteome</keyword>
<keyword id="KW-0804">Transcription</keyword>
<keyword id="KW-0805">Transcription regulation</keyword>
<keyword id="KW-0832">Ubl conjugation</keyword>
<accession>Q64693</accession>
<proteinExistence type="evidence at protein level"/>
<evidence type="ECO:0000250" key="1">
    <source>
        <dbReference type="UniProtKB" id="Q16633"/>
    </source>
</evidence>
<evidence type="ECO:0000255" key="2">
    <source>
        <dbReference type="PROSITE-ProRule" id="PRU01347"/>
    </source>
</evidence>
<evidence type="ECO:0000256" key="3">
    <source>
        <dbReference type="SAM" id="MobiDB-lite"/>
    </source>
</evidence>
<evidence type="ECO:0000269" key="4">
    <source>
    </source>
</evidence>
<evidence type="ECO:0000305" key="5"/>
<evidence type="ECO:0000305" key="6">
    <source>
    </source>
</evidence>
<evidence type="ECO:0000312" key="7">
    <source>
        <dbReference type="MGI" id="MGI:105086"/>
    </source>
</evidence>
<gene>
    <name evidence="7" type="primary">Pou2af1</name>
    <name type="synonym">Obf-1</name>
</gene>